<evidence type="ECO:0000250" key="1"/>
<evidence type="ECO:0000255" key="2"/>
<evidence type="ECO:0000305" key="3"/>
<proteinExistence type="evidence at transcript level"/>
<accession>A1L1C5</accession>
<protein>
    <recommendedName>
        <fullName>2-oxo-4-hydroxy-4-carboxy-5-ureidoimidazoline decarboxylase</fullName>
        <shortName>OHCU decarboxylase</shortName>
        <ecNumber>4.1.1.97</ecNumber>
    </recommendedName>
    <alternativeName>
        <fullName>Parahox neighbor</fullName>
    </alternativeName>
    <alternativeName>
        <fullName>Ureidoimidazoline (2-oxo-4-hydroxy-4-carboxy-5-) decarboxylase</fullName>
    </alternativeName>
</protein>
<gene>
    <name type="primary">urad</name>
    <name type="synonym">prhoxnb</name>
</gene>
<name>URAD_XENLA</name>
<keyword id="KW-0210">Decarboxylase</keyword>
<keyword id="KW-0456">Lyase</keyword>
<keyword id="KW-0576">Peroxisome</keyword>
<keyword id="KW-0659">Purine metabolism</keyword>
<keyword id="KW-1185">Reference proteome</keyword>
<comment type="function">
    <text evidence="1">Catalyzes the stereoselective decarboxylation of 2-oxo-4-hydroxy-4-carboxy-5-ureidoimidazoline (OHCU) to (S)-allantoin.</text>
</comment>
<comment type="catalytic activity">
    <reaction>
        <text>5-hydroxy-2-oxo-4-ureido-2,5-dihydro-1H-imidazole-5-carboxylate + H(+) = (S)-allantoin + CO2</text>
        <dbReference type="Rhea" id="RHEA:26301"/>
        <dbReference type="ChEBI" id="CHEBI:15378"/>
        <dbReference type="ChEBI" id="CHEBI:15678"/>
        <dbReference type="ChEBI" id="CHEBI:16526"/>
        <dbReference type="ChEBI" id="CHEBI:58639"/>
        <dbReference type="EC" id="4.1.1.97"/>
    </reaction>
</comment>
<comment type="pathway">
    <text>Purine metabolism; urate degradation; (S)-allantoin from urate: step 3/3.</text>
</comment>
<comment type="subcellular location">
    <subcellularLocation>
        <location evidence="3">Peroxisome</location>
    </subcellularLocation>
</comment>
<comment type="similarity">
    <text evidence="3">Belongs to the OHCU decarboxylase family.</text>
</comment>
<dbReference type="EC" id="4.1.1.97"/>
<dbReference type="EMBL" id="BC128985">
    <property type="protein sequence ID" value="AAI28986.1"/>
    <property type="molecule type" value="mRNA"/>
</dbReference>
<dbReference type="RefSeq" id="NP_001091261.1">
    <property type="nucleotide sequence ID" value="NM_001097792.1"/>
</dbReference>
<dbReference type="SMR" id="A1L1C5"/>
<dbReference type="DNASU" id="100037066"/>
<dbReference type="GeneID" id="100037066"/>
<dbReference type="KEGG" id="xla:100037066"/>
<dbReference type="AGR" id="Xenbase:XB-GENE-6255526"/>
<dbReference type="CTD" id="100037066"/>
<dbReference type="Xenbase" id="XB-GENE-6255526">
    <property type="gene designation" value="urad.L"/>
</dbReference>
<dbReference type="OMA" id="RCQNERA"/>
<dbReference type="OrthoDB" id="9970124at2759"/>
<dbReference type="UniPathway" id="UPA00394">
    <property type="reaction ID" value="UER00652"/>
</dbReference>
<dbReference type="Proteomes" id="UP000186698">
    <property type="component" value="Chromosome 2L"/>
</dbReference>
<dbReference type="Bgee" id="100037066">
    <property type="expression patterns" value="Expressed in kidney and 3 other cell types or tissues"/>
</dbReference>
<dbReference type="GO" id="GO:0005777">
    <property type="term" value="C:peroxisome"/>
    <property type="evidence" value="ECO:0000318"/>
    <property type="project" value="GO_Central"/>
</dbReference>
<dbReference type="GO" id="GO:0051997">
    <property type="term" value="F:2-oxo-4-hydroxy-4-carboxy-5-ureidoimidazoline decarboxylase activity"/>
    <property type="evidence" value="ECO:0000318"/>
    <property type="project" value="GO_Central"/>
</dbReference>
<dbReference type="GO" id="GO:0000255">
    <property type="term" value="P:allantoin metabolic process"/>
    <property type="evidence" value="ECO:0007669"/>
    <property type="project" value="InterPro"/>
</dbReference>
<dbReference type="GO" id="GO:0006144">
    <property type="term" value="P:purine nucleobase metabolic process"/>
    <property type="evidence" value="ECO:0007669"/>
    <property type="project" value="UniProtKB-KW"/>
</dbReference>
<dbReference type="GO" id="GO:0019628">
    <property type="term" value="P:urate catabolic process"/>
    <property type="evidence" value="ECO:0000318"/>
    <property type="project" value="GO_Central"/>
</dbReference>
<dbReference type="FunFam" id="1.10.3330.10:FF:000001">
    <property type="entry name" value="2-oxo-4-hydroxy-4-carboxy-5-ureidoimidazoline decarboxylase"/>
    <property type="match status" value="1"/>
</dbReference>
<dbReference type="Gene3D" id="1.10.3330.10">
    <property type="entry name" value="Oxo-4-hydroxy-4-carboxy-5-ureidoimidazoline decarboxylase"/>
    <property type="match status" value="1"/>
</dbReference>
<dbReference type="InterPro" id="IPR018020">
    <property type="entry name" value="OHCU_decarboxylase"/>
</dbReference>
<dbReference type="InterPro" id="IPR017580">
    <property type="entry name" value="OHCU_decarboxylase-1"/>
</dbReference>
<dbReference type="InterPro" id="IPR036778">
    <property type="entry name" value="OHCU_decarboxylase_sf"/>
</dbReference>
<dbReference type="NCBIfam" id="TIGR03164">
    <property type="entry name" value="UHCUDC"/>
    <property type="match status" value="1"/>
</dbReference>
<dbReference type="PANTHER" id="PTHR43466">
    <property type="entry name" value="2-OXO-4-HYDROXY-4-CARBOXY-5-UREIDOIMIDAZOLINE DECARBOXYLASE-RELATED"/>
    <property type="match status" value="1"/>
</dbReference>
<dbReference type="PANTHER" id="PTHR43466:SF1">
    <property type="entry name" value="2-OXO-4-HYDROXY-4-CARBOXY-5-UREIDOIMIDAZOLINE DECARBOXYLASE-RELATED"/>
    <property type="match status" value="1"/>
</dbReference>
<dbReference type="Pfam" id="PF09349">
    <property type="entry name" value="OHCU_decarbox"/>
    <property type="match status" value="1"/>
</dbReference>
<dbReference type="SUPFAM" id="SSF158694">
    <property type="entry name" value="UraD-Like"/>
    <property type="match status" value="1"/>
</dbReference>
<reference key="1">
    <citation type="submission" date="2006-12" db="EMBL/GenBank/DDBJ databases">
        <authorList>
            <consortium name="NIH - Xenopus Gene Collection (XGC) project"/>
        </authorList>
    </citation>
    <scope>NUCLEOTIDE SEQUENCE [LARGE SCALE MRNA]</scope>
    <source>
        <tissue>Kidney</tissue>
    </source>
</reference>
<organism>
    <name type="scientific">Xenopus laevis</name>
    <name type="common">African clawed frog</name>
    <dbReference type="NCBI Taxonomy" id="8355"/>
    <lineage>
        <taxon>Eukaryota</taxon>
        <taxon>Metazoa</taxon>
        <taxon>Chordata</taxon>
        <taxon>Craniata</taxon>
        <taxon>Vertebrata</taxon>
        <taxon>Euteleostomi</taxon>
        <taxon>Amphibia</taxon>
        <taxon>Batrachia</taxon>
        <taxon>Anura</taxon>
        <taxon>Pipoidea</taxon>
        <taxon>Pipidae</taxon>
        <taxon>Xenopodinae</taxon>
        <taxon>Xenopus</taxon>
        <taxon>Xenopus</taxon>
    </lineage>
</organism>
<sequence>MDLNTINSMSYEQFLDTFGNIIERCPLVTAAIWSQQPFASVTELENRVFDFIESLPLAGKEGILRCHPDLAGRDLMRGTLTDESQNEQAQAGLTLLSAKEKETLGFLNLQYKAKFGFPFVICAKMSDKNKIMQELGSRLQNEQSEELQKGIAEVKKICHLRICDLFLNEKLPTKL</sequence>
<feature type="chain" id="PRO_0000315244" description="2-oxo-4-hydroxy-4-carboxy-5-ureidoimidazoline decarboxylase">
    <location>
        <begin position="1"/>
        <end position="175"/>
    </location>
</feature>
<feature type="short sequence motif" description="Microbody targeting signal" evidence="2">
    <location>
        <begin position="173"/>
        <end position="175"/>
    </location>
</feature>
<feature type="active site" description="Proton donor" evidence="1">
    <location>
        <position position="67"/>
    </location>
</feature>
<feature type="binding site" evidence="1">
    <location>
        <position position="68"/>
    </location>
    <ligand>
        <name>substrate</name>
    </ligand>
</feature>
<feature type="binding site" evidence="1">
    <location>
        <begin position="84"/>
        <end position="88"/>
    </location>
    <ligand>
        <name>substrate</name>
    </ligand>
</feature>
<feature type="binding site" evidence="1">
    <location>
        <begin position="119"/>
        <end position="123"/>
    </location>
    <ligand>
        <name>substrate</name>
    </ligand>
</feature>